<name>UBP72_SCHPO</name>
<protein>
    <recommendedName>
        <fullName evidence="8">Ubiquitin carboxyl-terminal hydrolase 5</fullName>
        <ecNumber evidence="6">3.4.19.12</ecNumber>
    </recommendedName>
    <alternativeName>
        <fullName>Deubiquitinating enzyme 5</fullName>
    </alternativeName>
    <alternativeName>
        <fullName>Ubiquitin thioesterase 5</fullName>
    </alternativeName>
    <alternativeName>
        <fullName>Ubiquitin-specific-processing protease 5</fullName>
    </alternativeName>
</protein>
<organism>
    <name type="scientific">Schizosaccharomyces pombe (strain 972 / ATCC 24843)</name>
    <name type="common">Fission yeast</name>
    <dbReference type="NCBI Taxonomy" id="284812"/>
    <lineage>
        <taxon>Eukaryota</taxon>
        <taxon>Fungi</taxon>
        <taxon>Dikarya</taxon>
        <taxon>Ascomycota</taxon>
        <taxon>Taphrinomycotina</taxon>
        <taxon>Schizosaccharomycetes</taxon>
        <taxon>Schizosaccharomycetales</taxon>
        <taxon>Schizosaccharomycetaceae</taxon>
        <taxon>Schizosaccharomyces</taxon>
    </lineage>
</organism>
<accession>Q09879</accession>
<accession>Q10433</accession>
<accession>Q9Y7P5</accession>
<feature type="chain" id="PRO_0000080606" description="Ubiquitin carboxyl-terminal hydrolase 5">
    <location>
        <begin position="1"/>
        <end position="1108"/>
    </location>
</feature>
<feature type="domain" description="MATH" evidence="3">
    <location>
        <begin position="55"/>
        <end position="187"/>
    </location>
</feature>
<feature type="domain" description="USP">
    <location>
        <begin position="213"/>
        <end position="528"/>
    </location>
</feature>
<feature type="active site" description="Nucleophile" evidence="2">
    <location>
        <position position="120"/>
    </location>
</feature>
<feature type="active site" description="Nucleophile" evidence="4 5">
    <location>
        <position position="222"/>
    </location>
</feature>
<feature type="active site" description="Proton acceptor" evidence="4 5">
    <location>
        <position position="464"/>
    </location>
</feature>
<feature type="mutagenesis site" description="Decreases cleavage of the sde2 propeptide." evidence="6">
    <original>C</original>
    <variation>S</variation>
    <location>
        <position position="222"/>
    </location>
</feature>
<sequence>MVTGETLVDSQKSLINNDTLLNEKLKEDFEENVSIDVKIHEELRRALPDYEESGFQRFTWHIKSWHELDRRAVSPQFAVGSRQFKITYFPQGTLQSAGFTSIFLEYIPSEEEKLSNKYGCCCQFAFVISNPRKPSLSVANSAHCRFSPEIVDWGFTQFAELKKLLCRQAPDVPPIVEDGALLLTAYVRILKDPTGVLWHSFNDYDSKIATGYVGLKNQGATCYMNSLLQSLYIIHAFRRIVYQIPTDSPQGKDSIAYALQRCFYNLQFMNEPVSTTELTKSFGWDSLDSFMQHDVQEFNRVLQDNLERSMRDTKVENALTNLFVGKMKSYIACVNVNFESARSEDYWDIQLNVKGMKNLEDSFRSYIQVETLEGDNCYFADTYGFQEAKKGVIFESFPPILHLQLKRFEYDFERDMMIKINDRYEFPLEFDAKAFLSPEADQSQNCEYVLYGVLVHSGDLHNGHYYALLKTEKDGPWYKYDDTRVTRATLREVLEENYGGDYIMHPPFRSPVKLKRFMSAYMLLYLRKDKLDELMNPVSADEIPEHLKEALNPSIQLAELRRKERLESHLYTKVQLITPEFYSEHHEFDIADFGNAYKEETIPQFRIKKEAKFSEFIPIVAEKLGYPQECMRFWYVVKRHNCTVRVESPVNELNSTMEEVKNVWNSQGEILRLYLEITPENELSSSLTHQNTGEWNAFIFVKYFDRKSQEISGCGTLHVNKSDEIRSICPLLCERANLPKNTPLNIYEEIKPGMVDFLRLEKTFTQSELSTGDIICFEPCRPSALEDDIVNSGFDSALKLYDFLSNKVLVLFRPRFIDQDSIIEFEMLLDRRIKYDDLCIELGQKLGIGADHIRLTTCNPLTYSAGMVVPNDSNITLYEILYSSEEEMPSNVIFYETMDVSLSDLDRKRLVRLRWLVDGLANIELVEAYINKSGDINDLFGAVCERFPDSDLRKKKVRVYEVFESRYHRDLSLRTLIRTINPAATLVGEVVPLDQLQLYPEEKIVQVHHFHKDIARIHGIPFSFVIKPQEKFIDTKLRLAARTQYPESIFSVIKFCVVDFDNNRVVYLNDEDITYDVVEKLNGTLALDRAKKDSKKPNILDRAIQMKN</sequence>
<evidence type="ECO:0000250" key="1">
    <source>
        <dbReference type="UniProtKB" id="Q93009"/>
    </source>
</evidence>
<evidence type="ECO:0000250" key="2">
    <source>
        <dbReference type="UniProtKB" id="Q96AP4"/>
    </source>
</evidence>
<evidence type="ECO:0000255" key="3">
    <source>
        <dbReference type="PROSITE-ProRule" id="PRU00129"/>
    </source>
</evidence>
<evidence type="ECO:0000255" key="4">
    <source>
        <dbReference type="PROSITE-ProRule" id="PRU10092"/>
    </source>
</evidence>
<evidence type="ECO:0000255" key="5">
    <source>
        <dbReference type="PROSITE-ProRule" id="PRU10093"/>
    </source>
</evidence>
<evidence type="ECO:0000269" key="6">
    <source>
    </source>
</evidence>
<evidence type="ECO:0000269" key="7">
    <source>
    </source>
</evidence>
<evidence type="ECO:0000305" key="8"/>
<evidence type="ECO:0000305" key="9">
    <source>
    </source>
</evidence>
<keyword id="KW-0378">Hydrolase</keyword>
<keyword id="KW-0539">Nucleus</keyword>
<keyword id="KW-0645">Protease</keyword>
<keyword id="KW-1185">Reference proteome</keyword>
<keyword id="KW-0788">Thiol protease</keyword>
<keyword id="KW-0833">Ubl conjugation pathway</keyword>
<comment type="function">
    <text evidence="1 6">Hydrolase that deubiquitinates target proteins (By similarity). Cleaves the UBL propeptide in sde2 (PubMed:28947618).</text>
</comment>
<comment type="catalytic activity">
    <reaction evidence="6">
        <text>Thiol-dependent hydrolysis of ester, thioester, amide, peptide and isopeptide bonds formed by the C-terminal Gly of ubiquitin (a 76-residue protein attached to proteins as an intracellular targeting signal).</text>
        <dbReference type="EC" id="3.4.19.12"/>
    </reaction>
</comment>
<comment type="subcellular location">
    <subcellularLocation>
        <location evidence="9">Nucleus</location>
    </subcellularLocation>
</comment>
<comment type="disruption phenotype">
    <text evidence="6 7">Simultaneous knockout of ubp15 abolishes cleavage of the sde2 propeptide (PubMed:28947618). Simultaneous knockout of ubp15 leads to abnormal splicing of introns featuring long spacing between the branchpoint and 3'-splice site (PubMed:28947618, PubMed:36095128). Simultaneous knockout of ubp15 leads to a growth defect and thermal stress sensitivity (PubMed:28947618).</text>
</comment>
<comment type="similarity">
    <text evidence="8">Belongs to the peptidase C19 family.</text>
</comment>
<dbReference type="EC" id="3.4.19.12" evidence="6"/>
<dbReference type="EMBL" id="CU329672">
    <property type="protein sequence ID" value="CAB41228.1"/>
    <property type="molecule type" value="Genomic_DNA"/>
</dbReference>
<dbReference type="PIR" id="T41188">
    <property type="entry name" value="T41188"/>
</dbReference>
<dbReference type="RefSeq" id="NP_588211.1">
    <property type="nucleotide sequence ID" value="NM_001023201.2"/>
</dbReference>
<dbReference type="SMR" id="Q09879"/>
<dbReference type="BioGRID" id="275950">
    <property type="interactions" value="3"/>
</dbReference>
<dbReference type="FunCoup" id="Q09879">
    <property type="interactions" value="1031"/>
</dbReference>
<dbReference type="STRING" id="284812.Q09879"/>
<dbReference type="MEROPS" id="C19.A59"/>
<dbReference type="iPTMnet" id="Q09879"/>
<dbReference type="SwissPalm" id="Q09879"/>
<dbReference type="PaxDb" id="4896-SPCC188.08c.1"/>
<dbReference type="EnsemblFungi" id="SPCC188.08c.1">
    <property type="protein sequence ID" value="SPCC188.08c.1:pep"/>
    <property type="gene ID" value="SPCC188.08c"/>
</dbReference>
<dbReference type="GeneID" id="2539385"/>
<dbReference type="KEGG" id="spo:2539385"/>
<dbReference type="PomBase" id="SPCC188.08c">
    <property type="gene designation" value="ubp5"/>
</dbReference>
<dbReference type="VEuPathDB" id="FungiDB:SPCC188.08c"/>
<dbReference type="eggNOG" id="KOG1863">
    <property type="taxonomic scope" value="Eukaryota"/>
</dbReference>
<dbReference type="HOGENOM" id="CLU_003532_2_1_1"/>
<dbReference type="InParanoid" id="Q09879"/>
<dbReference type="OMA" id="INAKKHY"/>
<dbReference type="PhylomeDB" id="Q09879"/>
<dbReference type="Reactome" id="R-SPO-5689880">
    <property type="pathway name" value="Ub-specific processing proteases"/>
</dbReference>
<dbReference type="Reactome" id="R-SPO-6781823">
    <property type="pathway name" value="Formation of TC-NER Pre-Incision Complex"/>
</dbReference>
<dbReference type="Reactome" id="R-SPO-6782135">
    <property type="pathway name" value="Dual incision in TC-NER"/>
</dbReference>
<dbReference type="Reactome" id="R-SPO-6782210">
    <property type="pathway name" value="Gap-filling DNA repair synthesis and ligation in TC-NER"/>
</dbReference>
<dbReference type="Reactome" id="R-SPO-8866652">
    <property type="pathway name" value="Synthesis of active ubiquitin: roles of E1 and E2 enzymes"/>
</dbReference>
<dbReference type="Reactome" id="R-SPO-8948747">
    <property type="pathway name" value="Regulation of PTEN localization"/>
</dbReference>
<dbReference type="PRO" id="PR:Q09879"/>
<dbReference type="Proteomes" id="UP000002485">
    <property type="component" value="Chromosome III"/>
</dbReference>
<dbReference type="GO" id="GO:0005829">
    <property type="term" value="C:cytosol"/>
    <property type="evidence" value="ECO:0007005"/>
    <property type="project" value="PomBase"/>
</dbReference>
<dbReference type="GO" id="GO:0005794">
    <property type="term" value="C:Golgi apparatus"/>
    <property type="evidence" value="ECO:0007005"/>
    <property type="project" value="PomBase"/>
</dbReference>
<dbReference type="GO" id="GO:0005634">
    <property type="term" value="C:nucleus"/>
    <property type="evidence" value="ECO:0007005"/>
    <property type="project" value="PomBase"/>
</dbReference>
<dbReference type="GO" id="GO:0004843">
    <property type="term" value="F:cysteine-type deubiquitinase activity"/>
    <property type="evidence" value="ECO:0000318"/>
    <property type="project" value="GO_Central"/>
</dbReference>
<dbReference type="GO" id="GO:0004175">
    <property type="term" value="F:endopeptidase activity"/>
    <property type="evidence" value="ECO:0000314"/>
    <property type="project" value="PomBase"/>
</dbReference>
<dbReference type="GO" id="GO:0140492">
    <property type="term" value="F:metal-dependent deubiquitinase activity"/>
    <property type="evidence" value="ECO:0000314"/>
    <property type="project" value="PomBase"/>
</dbReference>
<dbReference type="GO" id="GO:0016579">
    <property type="term" value="P:protein deubiquitination"/>
    <property type="evidence" value="ECO:0007669"/>
    <property type="project" value="InterPro"/>
</dbReference>
<dbReference type="GO" id="GO:0006508">
    <property type="term" value="P:proteolysis"/>
    <property type="evidence" value="ECO:0007669"/>
    <property type="project" value="UniProtKB-KW"/>
</dbReference>
<dbReference type="GO" id="GO:0031647">
    <property type="term" value="P:regulation of protein stability"/>
    <property type="evidence" value="ECO:0000318"/>
    <property type="project" value="GO_Central"/>
</dbReference>
<dbReference type="CDD" id="cd03775">
    <property type="entry name" value="MATH_Ubp21p"/>
    <property type="match status" value="1"/>
</dbReference>
<dbReference type="CDD" id="cd02659">
    <property type="entry name" value="peptidase_C19C"/>
    <property type="match status" value="1"/>
</dbReference>
<dbReference type="FunFam" id="3.90.70.10:FF:000005">
    <property type="entry name" value="Ubiquitin carboxyl-terminal hydrolase 7"/>
    <property type="match status" value="1"/>
</dbReference>
<dbReference type="Gene3D" id="2.60.210.10">
    <property type="entry name" value="Apoptosis, Tumor Necrosis Factor Receptor Associated Protein 2, Chain A"/>
    <property type="match status" value="1"/>
</dbReference>
<dbReference type="Gene3D" id="3.90.70.10">
    <property type="entry name" value="Cysteine proteinases"/>
    <property type="match status" value="1"/>
</dbReference>
<dbReference type="Gene3D" id="3.10.20.90">
    <property type="entry name" value="Phosphatidylinositol 3-kinase Catalytic Subunit, Chain A, domain 1"/>
    <property type="match status" value="2"/>
</dbReference>
<dbReference type="InterPro" id="IPR002083">
    <property type="entry name" value="MATH/TRAF_dom"/>
</dbReference>
<dbReference type="InterPro" id="IPR038765">
    <property type="entry name" value="Papain-like_cys_pep_sf"/>
</dbReference>
<dbReference type="InterPro" id="IPR050164">
    <property type="entry name" value="Peptidase_C19"/>
</dbReference>
<dbReference type="InterPro" id="IPR001394">
    <property type="entry name" value="Peptidase_C19_UCH"/>
</dbReference>
<dbReference type="InterPro" id="IPR008974">
    <property type="entry name" value="TRAF-like"/>
</dbReference>
<dbReference type="InterPro" id="IPR024729">
    <property type="entry name" value="USP7_ICP0-binding_dom"/>
</dbReference>
<dbReference type="InterPro" id="IPR029346">
    <property type="entry name" value="USP_C"/>
</dbReference>
<dbReference type="InterPro" id="IPR018200">
    <property type="entry name" value="USP_CS"/>
</dbReference>
<dbReference type="InterPro" id="IPR028889">
    <property type="entry name" value="USP_dom"/>
</dbReference>
<dbReference type="PANTHER" id="PTHR24006">
    <property type="entry name" value="UBIQUITIN CARBOXYL-TERMINAL HYDROLASE"/>
    <property type="match status" value="1"/>
</dbReference>
<dbReference type="PANTHER" id="PTHR24006:SF644">
    <property type="entry name" value="UBIQUITIN CARBOXYL-TERMINAL HYDROLASE 7"/>
    <property type="match status" value="1"/>
</dbReference>
<dbReference type="Pfam" id="PF22486">
    <property type="entry name" value="MATH_2"/>
    <property type="match status" value="1"/>
</dbReference>
<dbReference type="Pfam" id="PF00443">
    <property type="entry name" value="UCH"/>
    <property type="match status" value="1"/>
</dbReference>
<dbReference type="Pfam" id="PF14533">
    <property type="entry name" value="USP7_C2"/>
    <property type="match status" value="1"/>
</dbReference>
<dbReference type="Pfam" id="PF12436">
    <property type="entry name" value="USP7_ICP0_bdg"/>
    <property type="match status" value="1"/>
</dbReference>
<dbReference type="SMART" id="SM00061">
    <property type="entry name" value="MATH"/>
    <property type="match status" value="1"/>
</dbReference>
<dbReference type="SUPFAM" id="SSF54001">
    <property type="entry name" value="Cysteine proteinases"/>
    <property type="match status" value="1"/>
</dbReference>
<dbReference type="SUPFAM" id="SSF49599">
    <property type="entry name" value="TRAF domain-like"/>
    <property type="match status" value="1"/>
</dbReference>
<dbReference type="PROSITE" id="PS50144">
    <property type="entry name" value="MATH"/>
    <property type="match status" value="1"/>
</dbReference>
<dbReference type="PROSITE" id="PS00972">
    <property type="entry name" value="USP_1"/>
    <property type="match status" value="1"/>
</dbReference>
<dbReference type="PROSITE" id="PS00973">
    <property type="entry name" value="USP_2"/>
    <property type="match status" value="1"/>
</dbReference>
<dbReference type="PROSITE" id="PS50235">
    <property type="entry name" value="USP_3"/>
    <property type="match status" value="1"/>
</dbReference>
<proteinExistence type="evidence at protein level"/>
<gene>
    <name type="primary">ubp5</name>
    <name type="ORF">SPCC188.08c</name>
</gene>
<reference key="1">
    <citation type="journal article" date="2002" name="Nature">
        <title>The genome sequence of Schizosaccharomyces pombe.</title>
        <authorList>
            <person name="Wood V."/>
            <person name="Gwilliam R."/>
            <person name="Rajandream M.A."/>
            <person name="Lyne M.H."/>
            <person name="Lyne R."/>
            <person name="Stewart A."/>
            <person name="Sgouros J.G."/>
            <person name="Peat N."/>
            <person name="Hayles J."/>
            <person name="Baker S.G."/>
            <person name="Basham D."/>
            <person name="Bowman S."/>
            <person name="Brooks K."/>
            <person name="Brown D."/>
            <person name="Brown S."/>
            <person name="Chillingworth T."/>
            <person name="Churcher C.M."/>
            <person name="Collins M."/>
            <person name="Connor R."/>
            <person name="Cronin A."/>
            <person name="Davis P."/>
            <person name="Feltwell T."/>
            <person name="Fraser A."/>
            <person name="Gentles S."/>
            <person name="Goble A."/>
            <person name="Hamlin N."/>
            <person name="Harris D.E."/>
            <person name="Hidalgo J."/>
            <person name="Hodgson G."/>
            <person name="Holroyd S."/>
            <person name="Hornsby T."/>
            <person name="Howarth S."/>
            <person name="Huckle E.J."/>
            <person name="Hunt S."/>
            <person name="Jagels K."/>
            <person name="James K.D."/>
            <person name="Jones L."/>
            <person name="Jones M."/>
            <person name="Leather S."/>
            <person name="McDonald S."/>
            <person name="McLean J."/>
            <person name="Mooney P."/>
            <person name="Moule S."/>
            <person name="Mungall K.L."/>
            <person name="Murphy L.D."/>
            <person name="Niblett D."/>
            <person name="Odell C."/>
            <person name="Oliver K."/>
            <person name="O'Neil S."/>
            <person name="Pearson D."/>
            <person name="Quail M.A."/>
            <person name="Rabbinowitsch E."/>
            <person name="Rutherford K.M."/>
            <person name="Rutter S."/>
            <person name="Saunders D."/>
            <person name="Seeger K."/>
            <person name="Sharp S."/>
            <person name="Skelton J."/>
            <person name="Simmonds M.N."/>
            <person name="Squares R."/>
            <person name="Squares S."/>
            <person name="Stevens K."/>
            <person name="Taylor K."/>
            <person name="Taylor R.G."/>
            <person name="Tivey A."/>
            <person name="Walsh S.V."/>
            <person name="Warren T."/>
            <person name="Whitehead S."/>
            <person name="Woodward J.R."/>
            <person name="Volckaert G."/>
            <person name="Aert R."/>
            <person name="Robben J."/>
            <person name="Grymonprez B."/>
            <person name="Weltjens I."/>
            <person name="Vanstreels E."/>
            <person name="Rieger M."/>
            <person name="Schaefer M."/>
            <person name="Mueller-Auer S."/>
            <person name="Gabel C."/>
            <person name="Fuchs M."/>
            <person name="Duesterhoeft A."/>
            <person name="Fritzc C."/>
            <person name="Holzer E."/>
            <person name="Moestl D."/>
            <person name="Hilbert H."/>
            <person name="Borzym K."/>
            <person name="Langer I."/>
            <person name="Beck A."/>
            <person name="Lehrach H."/>
            <person name="Reinhardt R."/>
            <person name="Pohl T.M."/>
            <person name="Eger P."/>
            <person name="Zimmermann W."/>
            <person name="Wedler H."/>
            <person name="Wambutt R."/>
            <person name="Purnelle B."/>
            <person name="Goffeau A."/>
            <person name="Cadieu E."/>
            <person name="Dreano S."/>
            <person name="Gloux S."/>
            <person name="Lelaure V."/>
            <person name="Mottier S."/>
            <person name="Galibert F."/>
            <person name="Aves S.J."/>
            <person name="Xiang Z."/>
            <person name="Hunt C."/>
            <person name="Moore K."/>
            <person name="Hurst S.M."/>
            <person name="Lucas M."/>
            <person name="Rochet M."/>
            <person name="Gaillardin C."/>
            <person name="Tallada V.A."/>
            <person name="Garzon A."/>
            <person name="Thode G."/>
            <person name="Daga R.R."/>
            <person name="Cruzado L."/>
            <person name="Jimenez J."/>
            <person name="Sanchez M."/>
            <person name="del Rey F."/>
            <person name="Benito J."/>
            <person name="Dominguez A."/>
            <person name="Revuelta J.L."/>
            <person name="Moreno S."/>
            <person name="Armstrong J."/>
            <person name="Forsburg S.L."/>
            <person name="Cerutti L."/>
            <person name="Lowe T."/>
            <person name="McCombie W.R."/>
            <person name="Paulsen I."/>
            <person name="Potashkin J."/>
            <person name="Shpakovski G.V."/>
            <person name="Ussery D."/>
            <person name="Barrell B.G."/>
            <person name="Nurse P."/>
        </authorList>
    </citation>
    <scope>NUCLEOTIDE SEQUENCE [LARGE SCALE GENOMIC DNA]</scope>
    <source>
        <strain>972 / ATCC 24843</strain>
    </source>
</reference>
<reference key="2">
    <citation type="journal article" date="2018" name="EMBO J.">
        <title>Sde2 is an intron-specific pre-mRNA splicing regulator activated by ubiquitin-like processing.</title>
        <authorList>
            <person name="Thakran P."/>
            <person name="Pandit P.A."/>
            <person name="Datta S."/>
            <person name="Kolathur K.K."/>
            <person name="Pleiss J.A."/>
            <person name="Mishra S.K."/>
        </authorList>
    </citation>
    <scope>FUNCTION</scope>
    <scope>CATALYTIC ACTIVITY</scope>
    <scope>SUBCELLULAR LOCATION</scope>
    <scope>DISRUPTION PHENOTYPE</scope>
    <scope>MUTAGENESIS OF CYS-222</scope>
</reference>
<reference key="3">
    <citation type="journal article" date="2022" name="Nucleic Acids Res.">
        <title>Splicing of branchpoint-distant exons is promoted by Cactin, Tls1 and the ubiquitin-fold-activated Sde2.</title>
        <authorList>
            <person name="Anil A.T."/>
            <person name="Choudhary K."/>
            <person name="Pandian R."/>
            <person name="Gupta P."/>
            <person name="Thakran P."/>
            <person name="Singh A."/>
            <person name="Sharma M."/>
            <person name="Mishra S.K."/>
        </authorList>
    </citation>
    <scope>DISRUPTION PHENOTYPE</scope>
</reference>